<feature type="chain" id="PRO_1000060656" description="Integration host factor subunit beta">
    <location>
        <begin position="1"/>
        <end position="95"/>
    </location>
</feature>
<feature type="region of interest" description="Disordered" evidence="2">
    <location>
        <begin position="56"/>
        <end position="76"/>
    </location>
</feature>
<accession>Q12ND8</accession>
<protein>
    <recommendedName>
        <fullName evidence="1">Integration host factor subunit beta</fullName>
        <shortName evidence="1">IHF-beta</shortName>
    </recommendedName>
</protein>
<reference key="1">
    <citation type="submission" date="2006-03" db="EMBL/GenBank/DDBJ databases">
        <title>Complete sequence of Shewanella denitrificans OS217.</title>
        <authorList>
            <consortium name="US DOE Joint Genome Institute"/>
            <person name="Copeland A."/>
            <person name="Lucas S."/>
            <person name="Lapidus A."/>
            <person name="Barry K."/>
            <person name="Detter J.C."/>
            <person name="Glavina del Rio T."/>
            <person name="Hammon N."/>
            <person name="Israni S."/>
            <person name="Dalin E."/>
            <person name="Tice H."/>
            <person name="Pitluck S."/>
            <person name="Brettin T."/>
            <person name="Bruce D."/>
            <person name="Han C."/>
            <person name="Tapia R."/>
            <person name="Gilna P."/>
            <person name="Kiss H."/>
            <person name="Schmutz J."/>
            <person name="Larimer F."/>
            <person name="Land M."/>
            <person name="Hauser L."/>
            <person name="Kyrpides N."/>
            <person name="Lykidis A."/>
            <person name="Richardson P."/>
        </authorList>
    </citation>
    <scope>NUCLEOTIDE SEQUENCE [LARGE SCALE GENOMIC DNA]</scope>
    <source>
        <strain>OS217 / ATCC BAA-1090 / DSM 15013</strain>
    </source>
</reference>
<sequence length="95" mass="10648">MTKSELIEKLATRQSQLSAKEVESAIKEMLEQMATTLEGGDRIEIRGFGSFSLHYRAPRTGRNPKTGTSVELDGKYVPHFKPGKELRERVDAVNV</sequence>
<proteinExistence type="inferred from homology"/>
<name>IHFB_SHEDO</name>
<evidence type="ECO:0000255" key="1">
    <source>
        <dbReference type="HAMAP-Rule" id="MF_00381"/>
    </source>
</evidence>
<evidence type="ECO:0000256" key="2">
    <source>
        <dbReference type="SAM" id="MobiDB-lite"/>
    </source>
</evidence>
<keyword id="KW-0233">DNA recombination</keyword>
<keyword id="KW-0238">DNA-binding</keyword>
<keyword id="KW-1185">Reference proteome</keyword>
<keyword id="KW-0804">Transcription</keyword>
<keyword id="KW-0805">Transcription regulation</keyword>
<keyword id="KW-0810">Translation regulation</keyword>
<dbReference type="EMBL" id="CP000302">
    <property type="protein sequence ID" value="ABE55038.1"/>
    <property type="molecule type" value="Genomic_DNA"/>
</dbReference>
<dbReference type="RefSeq" id="WP_011496195.1">
    <property type="nucleotide sequence ID" value="NC_007954.1"/>
</dbReference>
<dbReference type="SMR" id="Q12ND8"/>
<dbReference type="STRING" id="318161.Sden_1754"/>
<dbReference type="KEGG" id="sdn:Sden_1754"/>
<dbReference type="eggNOG" id="COG0776">
    <property type="taxonomic scope" value="Bacteria"/>
</dbReference>
<dbReference type="HOGENOM" id="CLU_105066_2_0_6"/>
<dbReference type="OrthoDB" id="9804203at2"/>
<dbReference type="Proteomes" id="UP000001982">
    <property type="component" value="Chromosome"/>
</dbReference>
<dbReference type="GO" id="GO:0005694">
    <property type="term" value="C:chromosome"/>
    <property type="evidence" value="ECO:0007669"/>
    <property type="project" value="InterPro"/>
</dbReference>
<dbReference type="GO" id="GO:0005829">
    <property type="term" value="C:cytosol"/>
    <property type="evidence" value="ECO:0007669"/>
    <property type="project" value="TreeGrafter"/>
</dbReference>
<dbReference type="GO" id="GO:0003677">
    <property type="term" value="F:DNA binding"/>
    <property type="evidence" value="ECO:0007669"/>
    <property type="project" value="UniProtKB-UniRule"/>
</dbReference>
<dbReference type="GO" id="GO:0030527">
    <property type="term" value="F:structural constituent of chromatin"/>
    <property type="evidence" value="ECO:0007669"/>
    <property type="project" value="InterPro"/>
</dbReference>
<dbReference type="GO" id="GO:0006310">
    <property type="term" value="P:DNA recombination"/>
    <property type="evidence" value="ECO:0007669"/>
    <property type="project" value="UniProtKB-UniRule"/>
</dbReference>
<dbReference type="GO" id="GO:0006355">
    <property type="term" value="P:regulation of DNA-templated transcription"/>
    <property type="evidence" value="ECO:0007669"/>
    <property type="project" value="UniProtKB-UniRule"/>
</dbReference>
<dbReference type="GO" id="GO:0006417">
    <property type="term" value="P:regulation of translation"/>
    <property type="evidence" value="ECO:0007669"/>
    <property type="project" value="UniProtKB-UniRule"/>
</dbReference>
<dbReference type="CDD" id="cd13836">
    <property type="entry name" value="IHF_B"/>
    <property type="match status" value="1"/>
</dbReference>
<dbReference type="FunFam" id="4.10.520.10:FF:000003">
    <property type="entry name" value="Integration host factor subunit beta"/>
    <property type="match status" value="1"/>
</dbReference>
<dbReference type="Gene3D" id="4.10.520.10">
    <property type="entry name" value="IHF-like DNA-binding proteins"/>
    <property type="match status" value="1"/>
</dbReference>
<dbReference type="HAMAP" id="MF_00381">
    <property type="entry name" value="IHF_beta"/>
    <property type="match status" value="1"/>
</dbReference>
<dbReference type="InterPro" id="IPR000119">
    <property type="entry name" value="Hist_DNA-bd"/>
</dbReference>
<dbReference type="InterPro" id="IPR020816">
    <property type="entry name" value="Histone-like_DNA-bd_CS"/>
</dbReference>
<dbReference type="InterPro" id="IPR010992">
    <property type="entry name" value="IHF-like_DNA-bd_dom_sf"/>
</dbReference>
<dbReference type="InterPro" id="IPR005685">
    <property type="entry name" value="IHF_beta"/>
</dbReference>
<dbReference type="NCBIfam" id="TIGR00988">
    <property type="entry name" value="hip"/>
    <property type="match status" value="1"/>
</dbReference>
<dbReference type="NCBIfam" id="NF001222">
    <property type="entry name" value="PRK00199.1"/>
    <property type="match status" value="1"/>
</dbReference>
<dbReference type="PANTHER" id="PTHR33175">
    <property type="entry name" value="DNA-BINDING PROTEIN HU"/>
    <property type="match status" value="1"/>
</dbReference>
<dbReference type="PANTHER" id="PTHR33175:SF5">
    <property type="entry name" value="INTEGRATION HOST FACTOR SUBUNIT BETA"/>
    <property type="match status" value="1"/>
</dbReference>
<dbReference type="Pfam" id="PF00216">
    <property type="entry name" value="Bac_DNA_binding"/>
    <property type="match status" value="1"/>
</dbReference>
<dbReference type="PRINTS" id="PR01727">
    <property type="entry name" value="DNABINDINGHU"/>
</dbReference>
<dbReference type="SMART" id="SM00411">
    <property type="entry name" value="BHL"/>
    <property type="match status" value="1"/>
</dbReference>
<dbReference type="SUPFAM" id="SSF47729">
    <property type="entry name" value="IHF-like DNA-binding proteins"/>
    <property type="match status" value="1"/>
</dbReference>
<dbReference type="PROSITE" id="PS00045">
    <property type="entry name" value="HISTONE_LIKE"/>
    <property type="match status" value="1"/>
</dbReference>
<organism>
    <name type="scientific">Shewanella denitrificans (strain OS217 / ATCC BAA-1090 / DSM 15013)</name>
    <dbReference type="NCBI Taxonomy" id="318161"/>
    <lineage>
        <taxon>Bacteria</taxon>
        <taxon>Pseudomonadati</taxon>
        <taxon>Pseudomonadota</taxon>
        <taxon>Gammaproteobacteria</taxon>
        <taxon>Alteromonadales</taxon>
        <taxon>Shewanellaceae</taxon>
        <taxon>Shewanella</taxon>
    </lineage>
</organism>
<comment type="function">
    <text evidence="1">This protein is one of the two subunits of integration host factor, a specific DNA-binding protein that functions in genetic recombination as well as in transcriptional and translational control.</text>
</comment>
<comment type="subunit">
    <text evidence="1">Heterodimer of an alpha and a beta chain.</text>
</comment>
<comment type="similarity">
    <text evidence="1">Belongs to the bacterial histone-like protein family.</text>
</comment>
<gene>
    <name evidence="1" type="primary">ihfB</name>
    <name evidence="1" type="synonym">himD</name>
    <name type="ordered locus">Sden_1754</name>
</gene>